<organism>
    <name type="scientific">Rattus norvegicus</name>
    <name type="common">Rat</name>
    <dbReference type="NCBI Taxonomy" id="10116"/>
    <lineage>
        <taxon>Eukaryota</taxon>
        <taxon>Metazoa</taxon>
        <taxon>Chordata</taxon>
        <taxon>Craniata</taxon>
        <taxon>Vertebrata</taxon>
        <taxon>Euteleostomi</taxon>
        <taxon>Mammalia</taxon>
        <taxon>Eutheria</taxon>
        <taxon>Euarchontoglires</taxon>
        <taxon>Glires</taxon>
        <taxon>Rodentia</taxon>
        <taxon>Myomorpha</taxon>
        <taxon>Muroidea</taxon>
        <taxon>Muridae</taxon>
        <taxon>Murinae</taxon>
        <taxon>Rattus</taxon>
    </lineage>
</organism>
<protein>
    <recommendedName>
        <fullName>SEC14-like protein 3</fullName>
    </recommendedName>
    <alternativeName>
        <fullName>45 kDa secretory protein</fullName>
        <shortName>rsec45</shortName>
    </alternativeName>
</protein>
<comment type="function">
    <text>Probable hydrophobic ligand-binding protein; may play a role in the transport of hydrophobic ligands like tocopherol, squalene and phospholipids.</text>
</comment>
<comment type="tissue specificity">
    <text>Detected in a layer of supportive cells in olfactory epithelium, in the apical region of the trachea and in the surface layer of ciliated bronchial epithelium in the lung.</text>
</comment>
<comment type="PTM">
    <text>The N-terminus seems to be blocked.</text>
</comment>
<reference key="1">
    <citation type="journal article" date="1999" name="FEBS Lett.">
        <title>A novel 45 kDa secretory protein from rat olfactory epithelium: primary structure and localisation.</title>
        <authorList>
            <person name="Merkulova M.I."/>
            <person name="Andreeva S.G."/>
            <person name="Shuvaeva T.M."/>
            <person name="Novoselov S.V."/>
            <person name="Peshenko I.V."/>
            <person name="Bystrova M.F."/>
            <person name="Novoselov V.I."/>
            <person name="Fesenko E.E."/>
            <person name="Lipkin V.M."/>
        </authorList>
    </citation>
    <scope>NUCLEOTIDE SEQUENCE [MRNA]</scope>
    <scope>PROTEIN SEQUENCE OF 5-11; 22-43; 52-58; 174-184; 217-225; 231-253; 258-266; 269-279 AND 383-396</scope>
    <source>
        <tissue>Olfactory epithelium</tissue>
    </source>
</reference>
<reference key="2">
    <citation type="journal article" date="2012" name="Nat. Commun.">
        <title>Quantitative maps of protein phosphorylation sites across 14 different rat organs and tissues.</title>
        <authorList>
            <person name="Lundby A."/>
            <person name="Secher A."/>
            <person name="Lage K."/>
            <person name="Nordsborg N.B."/>
            <person name="Dmytriyev A."/>
            <person name="Lundby C."/>
            <person name="Olsen J.V."/>
        </authorList>
    </citation>
    <scope>PHOSPHORYLATION [LARGE SCALE ANALYSIS] AT SER-223</scope>
    <scope>IDENTIFICATION BY MASS SPECTROMETRY [LARGE SCALE ANALYSIS]</scope>
</reference>
<accession>Q9Z1J8</accession>
<feature type="chain" id="PRO_0000210759" description="SEC14-like protein 3">
    <location>
        <begin position="1"/>
        <end position="400"/>
    </location>
</feature>
<feature type="domain" description="CRAL-TRIO" evidence="1">
    <location>
        <begin position="76"/>
        <end position="249"/>
    </location>
</feature>
<feature type="domain" description="GOLD" evidence="2">
    <location>
        <begin position="275"/>
        <end position="383"/>
    </location>
</feature>
<feature type="modified residue" description="Phosphoserine" evidence="3">
    <location>
        <position position="223"/>
    </location>
</feature>
<name>S14L3_RAT</name>
<keyword id="KW-0903">Direct protein sequencing</keyword>
<keyword id="KW-0446">Lipid-binding</keyword>
<keyword id="KW-0597">Phosphoprotein</keyword>
<keyword id="KW-1185">Reference proteome</keyword>
<keyword id="KW-0813">Transport</keyword>
<evidence type="ECO:0000255" key="1">
    <source>
        <dbReference type="PROSITE-ProRule" id="PRU00056"/>
    </source>
</evidence>
<evidence type="ECO:0000255" key="2">
    <source>
        <dbReference type="PROSITE-ProRule" id="PRU00096"/>
    </source>
</evidence>
<evidence type="ECO:0007744" key="3">
    <source>
    </source>
</evidence>
<gene>
    <name type="primary">Sec14l3</name>
</gene>
<dbReference type="EMBL" id="AJ132352">
    <property type="protein sequence ID" value="CAA10644.1"/>
    <property type="molecule type" value="mRNA"/>
</dbReference>
<dbReference type="FunCoup" id="Q9Z1J8">
    <property type="interactions" value="97"/>
</dbReference>
<dbReference type="iPTMnet" id="Q9Z1J8"/>
<dbReference type="PhosphoSitePlus" id="Q9Z1J8"/>
<dbReference type="jPOST" id="Q9Z1J8"/>
<dbReference type="PaxDb" id="10116-ENSRNOP00000006116"/>
<dbReference type="UCSC" id="RGD:620812">
    <property type="organism name" value="rat"/>
</dbReference>
<dbReference type="AGR" id="RGD:620812"/>
<dbReference type="RGD" id="620812">
    <property type="gene designation" value="Sec14l3"/>
</dbReference>
<dbReference type="VEuPathDB" id="HostDB:ENSRNOG00000004555"/>
<dbReference type="eggNOG" id="KOG1471">
    <property type="taxonomic scope" value="Eukaryota"/>
</dbReference>
<dbReference type="HOGENOM" id="CLU_014001_2_1_1"/>
<dbReference type="InParanoid" id="Q9Z1J8"/>
<dbReference type="PRO" id="PR:Q9Z1J8"/>
<dbReference type="Proteomes" id="UP000002494">
    <property type="component" value="Chromosome 14"/>
</dbReference>
<dbReference type="Bgee" id="ENSRNOG00000004555">
    <property type="expression patterns" value="Expressed in lung and 13 other cell types or tissues"/>
</dbReference>
<dbReference type="ExpressionAtlas" id="Q9Z1J8">
    <property type="expression patterns" value="baseline and differential"/>
</dbReference>
<dbReference type="GO" id="GO:0005737">
    <property type="term" value="C:cytoplasm"/>
    <property type="evidence" value="ECO:0000318"/>
    <property type="project" value="GO_Central"/>
</dbReference>
<dbReference type="GO" id="GO:0008289">
    <property type="term" value="F:lipid binding"/>
    <property type="evidence" value="ECO:0007669"/>
    <property type="project" value="UniProtKB-KW"/>
</dbReference>
<dbReference type="CDD" id="cd00170">
    <property type="entry name" value="SEC14"/>
    <property type="match status" value="1"/>
</dbReference>
<dbReference type="FunFam" id="3.40.525.10:FF:000009">
    <property type="entry name" value="SEC14-like 2 (S. cerevisiae)"/>
    <property type="match status" value="1"/>
</dbReference>
<dbReference type="FunFam" id="2.60.120.680:FF:000001">
    <property type="entry name" value="SEC14-like protein 2 isoform X1"/>
    <property type="match status" value="1"/>
</dbReference>
<dbReference type="Gene3D" id="3.40.525.10">
    <property type="entry name" value="CRAL-TRIO lipid binding domain"/>
    <property type="match status" value="1"/>
</dbReference>
<dbReference type="Gene3D" id="2.60.120.680">
    <property type="entry name" value="GOLD domain"/>
    <property type="match status" value="1"/>
</dbReference>
<dbReference type="InterPro" id="IPR001251">
    <property type="entry name" value="CRAL-TRIO_dom"/>
</dbReference>
<dbReference type="InterPro" id="IPR036865">
    <property type="entry name" value="CRAL-TRIO_dom_sf"/>
</dbReference>
<dbReference type="InterPro" id="IPR011074">
    <property type="entry name" value="CRAL/TRIO_N_dom"/>
</dbReference>
<dbReference type="InterPro" id="IPR036273">
    <property type="entry name" value="CRAL/TRIO_N_dom_sf"/>
</dbReference>
<dbReference type="InterPro" id="IPR009038">
    <property type="entry name" value="GOLD_dom"/>
</dbReference>
<dbReference type="InterPro" id="IPR036598">
    <property type="entry name" value="GOLD_dom_sf"/>
</dbReference>
<dbReference type="InterPro" id="IPR051064">
    <property type="entry name" value="SEC14/CRAL-TRIO_domain"/>
</dbReference>
<dbReference type="PANTHER" id="PTHR23324">
    <property type="entry name" value="SEC14 RELATED PROTEIN"/>
    <property type="match status" value="1"/>
</dbReference>
<dbReference type="PANTHER" id="PTHR23324:SF62">
    <property type="entry name" value="SEC14-LIKE PROTEIN 3"/>
    <property type="match status" value="1"/>
</dbReference>
<dbReference type="Pfam" id="PF00650">
    <property type="entry name" value="CRAL_TRIO"/>
    <property type="match status" value="1"/>
</dbReference>
<dbReference type="Pfam" id="PF03765">
    <property type="entry name" value="CRAL_TRIO_N"/>
    <property type="match status" value="1"/>
</dbReference>
<dbReference type="PRINTS" id="PR00180">
    <property type="entry name" value="CRETINALDHBP"/>
</dbReference>
<dbReference type="SMART" id="SM01100">
    <property type="entry name" value="CRAL_TRIO_N"/>
    <property type="match status" value="1"/>
</dbReference>
<dbReference type="SMART" id="SM00516">
    <property type="entry name" value="SEC14"/>
    <property type="match status" value="1"/>
</dbReference>
<dbReference type="SUPFAM" id="SSF52087">
    <property type="entry name" value="CRAL/TRIO domain"/>
    <property type="match status" value="1"/>
</dbReference>
<dbReference type="SUPFAM" id="SSF46938">
    <property type="entry name" value="CRAL/TRIO N-terminal domain"/>
    <property type="match status" value="1"/>
</dbReference>
<dbReference type="SUPFAM" id="SSF101576">
    <property type="entry name" value="Supernatant protein factor (SPF), C-terminal domain"/>
    <property type="match status" value="1"/>
</dbReference>
<dbReference type="PROSITE" id="PS50191">
    <property type="entry name" value="CRAL_TRIO"/>
    <property type="match status" value="1"/>
</dbReference>
<dbReference type="PROSITE" id="PS50866">
    <property type="entry name" value="GOLD"/>
    <property type="match status" value="1"/>
</dbReference>
<proteinExistence type="evidence at protein level"/>
<sequence length="400" mass="46027">MSGRVGDLSPKQAETLAKFRENVQDVLPALPNPDDYFLLRWLRARNFDLQKSEAMLRKYMEFRKTMDIDHILDWQPPEVIQKYMPGGLCGYDRDGCPVWYDIIGPLDPKGLLFSVTKQDLLKTKMRDCERILHECDLQTERLGRKIETIVMIFDCEGLGLKHFWKPLVEVYQEFFGLLEENYPETLKFMLIVKATKLFPVGYNLMKPFLSEDTRRKIVVLGNSWKEGLLKLISPEELPAHFGGTLTDPDGNPKCLTKINYGGEIPKSMYVRDQVKTQYEHSVQISRGSSHQVEYEILFPGCVLRWQFSSDGADIGFGVFLKTKMGERQKAGEMTEVLTSQRYNAHMVPEDGSLTCTEAGVYVLRFDNTYSFVHAKKVSFTVEVLLPDEGMQKYDEELTPI</sequence>